<gene>
    <name type="primary">IRC8</name>
    <name type="ordered locus">YJL051W</name>
    <name type="ORF">J1156</name>
</gene>
<comment type="subcellular location">
    <subcellularLocation>
        <location>Membrane</location>
        <topology>Multi-pass membrane protein</topology>
    </subcellularLocation>
</comment>
<sequence length="822" mass="91256">MCHNSVRSGNKAGFLGIKFGSALLSIATGAIAIALLCKFHDHEAVLIVIVCSTLLYGIPSLISFITETVFAPSKFHIGYFYNVLNFALPLITMGCTVDYFHNTLRSPISVQSESHRVYITTLDSLLIFTLFINGIQLGFFLKDGNANNFGSSSNNISTDQYDKEANAVENGRFVPLKNSSQTLTPDLELLHGSPKSMNGVAWLINELSTNSNTNANKTISSDENSNSSVIRHKLGPISTSKCPKKPSHSHFSKLKKYNSFFLGPKENRYKRNTQQATKVPTEKKSNHRSSQYVSRLSTISDISKSFLNFLALNEKNGNSTSTARTPSEGRVSIIINEGNNTLKYKTPHDSHTIDSPNLELEREAIGRINSALLPACLRVTDKMISPQQSTQNEDSYQATPLIPQVEVDDDFYVGDILMTNELQDIPQVPRISSDIEDDFEQQYTKHVDLPARVTLEMWEKDQEKILQKVTTNRDKSKLLPPFRFTSESDMDPSTSTELEVELHAQNNFSFPFKSAGLQIATSDQFNQQEFKTSDTISELDEYLHDPSIQEEDASQLIESSLNQNNLSSTTIDNGPKDMSRFSTRHSPTKSIISMISGSGSVKHQHSHSTLSNFFTGHSRNNSQINQLLQGSSSNMMSNTSPHSSPTKSLRMRFGKKLSLSNISDTMSPYEGSTTDPINYSFGHGHNKNQSIDFSYVRTLQSSHSPTKSTSGNSRRDSLNNDRTQSTVNERALRTASTLFYLQHNNATCTLNGEEPVLDTPQSIQSSSSGSEQESAGSGSGYPEVVFSEYDREKWNVLRNLKEIAPEKTIESGPVEELVSPSK</sequence>
<dbReference type="EMBL" id="Z49326">
    <property type="protein sequence ID" value="CAA89342.1"/>
    <property type="molecule type" value="Genomic_DNA"/>
</dbReference>
<dbReference type="EMBL" id="BK006943">
    <property type="protein sequence ID" value="DAA08748.1"/>
    <property type="molecule type" value="Genomic_DNA"/>
</dbReference>
<dbReference type="PIR" id="S56823">
    <property type="entry name" value="S56823"/>
</dbReference>
<dbReference type="RefSeq" id="NP_012484.1">
    <property type="nucleotide sequence ID" value="NM_001181484.1"/>
</dbReference>
<dbReference type="BioGRID" id="33704">
    <property type="interactions" value="113"/>
</dbReference>
<dbReference type="FunCoup" id="P47046">
    <property type="interactions" value="50"/>
</dbReference>
<dbReference type="MINT" id="P47046"/>
<dbReference type="STRING" id="4932.YJL051W"/>
<dbReference type="iPTMnet" id="P47046"/>
<dbReference type="PaxDb" id="4932-YJL051W"/>
<dbReference type="PeptideAtlas" id="P47046"/>
<dbReference type="EnsemblFungi" id="YJL051W_mRNA">
    <property type="protein sequence ID" value="YJL051W"/>
    <property type="gene ID" value="YJL051W"/>
</dbReference>
<dbReference type="GeneID" id="853396"/>
<dbReference type="KEGG" id="sce:YJL051W"/>
<dbReference type="AGR" id="SGD:S000003587"/>
<dbReference type="SGD" id="S000003587">
    <property type="gene designation" value="IRC8"/>
</dbReference>
<dbReference type="VEuPathDB" id="FungiDB:YJL051W"/>
<dbReference type="eggNOG" id="ENOG502RMJZ">
    <property type="taxonomic scope" value="Eukaryota"/>
</dbReference>
<dbReference type="HOGENOM" id="CLU_019067_0_0_1"/>
<dbReference type="InParanoid" id="P47046"/>
<dbReference type="OMA" id="HDSHTID"/>
<dbReference type="OrthoDB" id="4068368at2759"/>
<dbReference type="BioCyc" id="YEAST:G3O-31515-MONOMER"/>
<dbReference type="BioGRID-ORCS" id="853396">
    <property type="hits" value="1 hit in 10 CRISPR screens"/>
</dbReference>
<dbReference type="PRO" id="PR:P47046"/>
<dbReference type="Proteomes" id="UP000002311">
    <property type="component" value="Chromosome X"/>
</dbReference>
<dbReference type="RNAct" id="P47046">
    <property type="molecule type" value="protein"/>
</dbReference>
<dbReference type="GO" id="GO:0071944">
    <property type="term" value="C:cell periphery"/>
    <property type="evidence" value="ECO:0007005"/>
    <property type="project" value="SGD"/>
</dbReference>
<dbReference type="GO" id="GO:0005933">
    <property type="term" value="C:cellular bud"/>
    <property type="evidence" value="ECO:0000314"/>
    <property type="project" value="SGD"/>
</dbReference>
<dbReference type="GO" id="GO:0000324">
    <property type="term" value="C:fungal-type vacuole"/>
    <property type="evidence" value="ECO:0007005"/>
    <property type="project" value="SGD"/>
</dbReference>
<dbReference type="GO" id="GO:0016020">
    <property type="term" value="C:membrane"/>
    <property type="evidence" value="ECO:0007669"/>
    <property type="project" value="UniProtKB-SubCell"/>
</dbReference>
<dbReference type="GO" id="GO:0006312">
    <property type="term" value="P:mitotic recombination"/>
    <property type="evidence" value="ECO:0000315"/>
    <property type="project" value="SGD"/>
</dbReference>
<reference key="1">
    <citation type="journal article" date="1996" name="EMBO J.">
        <title>Complete nucleotide sequence of Saccharomyces cerevisiae chromosome X.</title>
        <authorList>
            <person name="Galibert F."/>
            <person name="Alexandraki D."/>
            <person name="Baur A."/>
            <person name="Boles E."/>
            <person name="Chalwatzis N."/>
            <person name="Chuat J.-C."/>
            <person name="Coster F."/>
            <person name="Cziepluch C."/>
            <person name="de Haan M."/>
            <person name="Domdey H."/>
            <person name="Durand P."/>
            <person name="Entian K.-D."/>
            <person name="Gatius M."/>
            <person name="Goffeau A."/>
            <person name="Grivell L.A."/>
            <person name="Hennemann A."/>
            <person name="Herbert C.J."/>
            <person name="Heumann K."/>
            <person name="Hilger F."/>
            <person name="Hollenberg C.P."/>
            <person name="Huang M.-E."/>
            <person name="Jacq C."/>
            <person name="Jauniaux J.-C."/>
            <person name="Katsoulou C."/>
            <person name="Kirchrath L."/>
            <person name="Kleine K."/>
            <person name="Kordes E."/>
            <person name="Koetter P."/>
            <person name="Liebl S."/>
            <person name="Louis E.J."/>
            <person name="Manus V."/>
            <person name="Mewes H.-W."/>
            <person name="Miosga T."/>
            <person name="Obermaier B."/>
            <person name="Perea J."/>
            <person name="Pohl T.M."/>
            <person name="Portetelle D."/>
            <person name="Pujol A."/>
            <person name="Purnelle B."/>
            <person name="Ramezani Rad M."/>
            <person name="Rasmussen S.W."/>
            <person name="Rose M."/>
            <person name="Rossau R."/>
            <person name="Schaaff-Gerstenschlaeger I."/>
            <person name="Smits P.H.M."/>
            <person name="Scarcez T."/>
            <person name="Soriano N."/>
            <person name="To Van D."/>
            <person name="Tzermia M."/>
            <person name="Van Broekhoven A."/>
            <person name="Vandenbol M."/>
            <person name="Wedler H."/>
            <person name="von Wettstein D."/>
            <person name="Wambutt R."/>
            <person name="Zagulski M."/>
            <person name="Zollner A."/>
            <person name="Karpfinger-Hartl L."/>
        </authorList>
    </citation>
    <scope>NUCLEOTIDE SEQUENCE [LARGE SCALE GENOMIC DNA]</scope>
    <source>
        <strain>ATCC 204508 / S288c</strain>
    </source>
</reference>
<reference key="2">
    <citation type="journal article" date="2014" name="G3 (Bethesda)">
        <title>The reference genome sequence of Saccharomyces cerevisiae: Then and now.</title>
        <authorList>
            <person name="Engel S.R."/>
            <person name="Dietrich F.S."/>
            <person name="Fisk D.G."/>
            <person name="Binkley G."/>
            <person name="Balakrishnan R."/>
            <person name="Costanzo M.C."/>
            <person name="Dwight S.S."/>
            <person name="Hitz B.C."/>
            <person name="Karra K."/>
            <person name="Nash R.S."/>
            <person name="Weng S."/>
            <person name="Wong E.D."/>
            <person name="Lloyd P."/>
            <person name="Skrzypek M.S."/>
            <person name="Miyasato S.R."/>
            <person name="Simison M."/>
            <person name="Cherry J.M."/>
        </authorList>
    </citation>
    <scope>GENOME REANNOTATION</scope>
    <source>
        <strain>ATCC 204508 / S288c</strain>
    </source>
</reference>
<reference key="3">
    <citation type="journal article" date="2006" name="Proc. Natl. Acad. Sci. U.S.A.">
        <title>A global topology map of the Saccharomyces cerevisiae membrane proteome.</title>
        <authorList>
            <person name="Kim H."/>
            <person name="Melen K."/>
            <person name="Oesterberg M."/>
            <person name="von Heijne G."/>
        </authorList>
    </citation>
    <scope>TOPOLOGY [LARGE SCALE ANALYSIS]</scope>
    <source>
        <strain>ATCC 208353 / W303-1A</strain>
    </source>
</reference>
<reference key="4">
    <citation type="journal article" date="2009" name="Science">
        <title>Global analysis of Cdk1 substrate phosphorylation sites provides insights into evolution.</title>
        <authorList>
            <person name="Holt L.J."/>
            <person name="Tuch B.B."/>
            <person name="Villen J."/>
            <person name="Johnson A.D."/>
            <person name="Gygi S.P."/>
            <person name="Morgan D.O."/>
        </authorList>
    </citation>
    <scope>PHOSPHORYLATION [LARGE SCALE ANALYSIS] AT SER-690</scope>
    <scope>IDENTIFICATION BY MASS SPECTROMETRY [LARGE SCALE ANALYSIS]</scope>
</reference>
<keyword id="KW-0472">Membrane</keyword>
<keyword id="KW-0597">Phosphoprotein</keyword>
<keyword id="KW-1185">Reference proteome</keyword>
<keyword id="KW-0812">Transmembrane</keyword>
<keyword id="KW-1133">Transmembrane helix</keyword>
<organism>
    <name type="scientific">Saccharomyces cerevisiae (strain ATCC 204508 / S288c)</name>
    <name type="common">Baker's yeast</name>
    <dbReference type="NCBI Taxonomy" id="559292"/>
    <lineage>
        <taxon>Eukaryota</taxon>
        <taxon>Fungi</taxon>
        <taxon>Dikarya</taxon>
        <taxon>Ascomycota</taxon>
        <taxon>Saccharomycotina</taxon>
        <taxon>Saccharomycetes</taxon>
        <taxon>Saccharomycetales</taxon>
        <taxon>Saccharomycetaceae</taxon>
        <taxon>Saccharomyces</taxon>
    </lineage>
</organism>
<evidence type="ECO:0000255" key="1"/>
<evidence type="ECO:0000256" key="2">
    <source>
        <dbReference type="SAM" id="MobiDB-lite"/>
    </source>
</evidence>
<evidence type="ECO:0007744" key="3">
    <source>
    </source>
</evidence>
<accession>P47046</accession>
<accession>D6VWD2</accession>
<feature type="chain" id="PRO_0000203064" description="Uncharacterized protein IRC8">
    <location>
        <begin position="1"/>
        <end position="822"/>
    </location>
</feature>
<feature type="topological domain" description="Cytoplasmic" evidence="1">
    <location>
        <begin position="1"/>
        <end position="13"/>
    </location>
</feature>
<feature type="transmembrane region" description="Helical" evidence="1">
    <location>
        <begin position="14"/>
        <end position="34"/>
    </location>
</feature>
<feature type="topological domain" description="Extracellular" evidence="1">
    <location>
        <begin position="35"/>
        <end position="44"/>
    </location>
</feature>
<feature type="transmembrane region" description="Helical" evidence="1">
    <location>
        <begin position="45"/>
        <end position="65"/>
    </location>
</feature>
<feature type="topological domain" description="Cytoplasmic" evidence="1">
    <location>
        <begin position="66"/>
        <end position="76"/>
    </location>
</feature>
<feature type="transmembrane region" description="Helical" evidence="1">
    <location>
        <begin position="77"/>
        <end position="97"/>
    </location>
</feature>
<feature type="topological domain" description="Extracellular" evidence="1">
    <location>
        <begin position="98"/>
        <end position="120"/>
    </location>
</feature>
<feature type="transmembrane region" description="Helical" evidence="1">
    <location>
        <begin position="121"/>
        <end position="141"/>
    </location>
</feature>
<feature type="topological domain" description="Cytoplasmic" evidence="1">
    <location>
        <begin position="142"/>
        <end position="822"/>
    </location>
</feature>
<feature type="region of interest" description="Disordered" evidence="2">
    <location>
        <begin position="271"/>
        <end position="290"/>
    </location>
</feature>
<feature type="region of interest" description="Disordered" evidence="2">
    <location>
        <begin position="698"/>
        <end position="728"/>
    </location>
</feature>
<feature type="region of interest" description="Disordered" evidence="2">
    <location>
        <begin position="751"/>
        <end position="783"/>
    </location>
</feature>
<feature type="compositionally biased region" description="Polar residues" evidence="2">
    <location>
        <begin position="698"/>
        <end position="712"/>
    </location>
</feature>
<feature type="compositionally biased region" description="Low complexity" evidence="2">
    <location>
        <begin position="761"/>
        <end position="776"/>
    </location>
</feature>
<feature type="modified residue" description="Phosphoserine" evidence="3">
    <location>
        <position position="690"/>
    </location>
</feature>
<protein>
    <recommendedName>
        <fullName>Uncharacterized protein IRC8</fullName>
    </recommendedName>
    <alternativeName>
        <fullName>Increased recombination centers protein 8</fullName>
    </alternativeName>
</protein>
<proteinExistence type="evidence at protein level"/>
<name>IRC8_YEAST</name>